<proteinExistence type="evidence at protein level"/>
<reference key="1">
    <citation type="journal article" date="1991" name="Eur. J. Biochem.">
        <title>Differences in primary structure among five phospholipases A2 from Heloderma suspectum.</title>
        <authorList>
            <person name="Vandermeers A."/>
            <person name="Vandermeers-Piret M.-C."/>
            <person name="Vigneron L."/>
            <person name="Rathe J."/>
            <person name="Stievenart M."/>
            <person name="Christophe J."/>
        </authorList>
    </citation>
    <scope>PROTEIN SEQUENCE</scope>
    <source>
        <tissue>Venom</tissue>
    </source>
</reference>
<reference key="2">
    <citation type="journal article" date="1989" name="Eur. J. Biochem.">
        <title>Purification and characterization of five variants of phospholipase A2 and complete primary structure of the main phospholipase A2 variant in Heloderma suspectum (Gila monster) venom.</title>
        <authorList>
            <person name="Gomez F."/>
            <person name="Vandermeers A."/>
            <person name="Vandermeers-Piret M.-C."/>
            <person name="Herzog R."/>
            <person name="Rathe J."/>
            <person name="Stievenart M."/>
            <person name="Winand J."/>
            <person name="Christophe J."/>
        </authorList>
    </citation>
    <scope>PROTEIN SEQUENCE</scope>
    <source>
        <tissue>Venom</tissue>
    </source>
</reference>
<feature type="chain" id="PRO_0000161648" description="Phospholipase A2 isozymes PA3A/PA3B/PA5">
    <location>
        <begin position="1"/>
        <end position="143"/>
    </location>
</feature>
<feature type="active site" evidence="2">
    <location>
        <position position="36"/>
    </location>
</feature>
<feature type="binding site" evidence="1">
    <location>
        <position position="10"/>
    </location>
    <ligand>
        <name>Ca(2+)</name>
        <dbReference type="ChEBI" id="CHEBI:29108"/>
    </ligand>
</feature>
<feature type="binding site" evidence="1">
    <location>
        <position position="12"/>
    </location>
    <ligand>
        <name>Ca(2+)</name>
        <dbReference type="ChEBI" id="CHEBI:29108"/>
    </ligand>
</feature>
<feature type="binding site" evidence="1">
    <location>
        <position position="14"/>
    </location>
    <ligand>
        <name>Ca(2+)</name>
        <dbReference type="ChEBI" id="CHEBI:29108"/>
    </ligand>
</feature>
<feature type="binding site" evidence="1">
    <location>
        <position position="37"/>
    </location>
    <ligand>
        <name>Ca(2+)</name>
        <dbReference type="ChEBI" id="CHEBI:29108"/>
    </ligand>
</feature>
<feature type="disulfide bond" evidence="1">
    <location>
        <begin position="11"/>
        <end position="33"/>
    </location>
</feature>
<feature type="disulfide bond" evidence="1">
    <location>
        <begin position="32"/>
        <end position="72"/>
    </location>
</feature>
<feature type="disulfide bond" evidence="1">
    <location>
        <begin position="39"/>
        <end position="65"/>
    </location>
</feature>
<feature type="sequence variant" description="In isozyme PA3A.">
    <location>
        <begin position="142"/>
        <end position="143"/>
    </location>
</feature>
<feature type="sequence variant" description="In isozyme PA5.">
    <location>
        <position position="143"/>
    </location>
</feature>
<evidence type="ECO:0000250" key="1"/>
<evidence type="ECO:0000255" key="2">
    <source>
        <dbReference type="PROSITE-ProRule" id="PRU10035"/>
    </source>
</evidence>
<evidence type="ECO:0000305" key="3"/>
<keyword id="KW-0106">Calcium</keyword>
<keyword id="KW-0903">Direct protein sequencing</keyword>
<keyword id="KW-1015">Disulfide bond</keyword>
<keyword id="KW-0378">Hydrolase</keyword>
<keyword id="KW-0442">Lipid degradation</keyword>
<keyword id="KW-0443">Lipid metabolism</keyword>
<keyword id="KW-0479">Metal-binding</keyword>
<keyword id="KW-0964">Secreted</keyword>
<comment type="function">
    <text>PLA2 catalyzes the calcium-dependent hydrolysis of the 2-acyl groups in 3-sn-phosphoglycerides.</text>
</comment>
<comment type="catalytic activity">
    <reaction evidence="2">
        <text>a 1,2-diacyl-sn-glycero-3-phosphocholine + H2O = a 1-acyl-sn-glycero-3-phosphocholine + a fatty acid + H(+)</text>
        <dbReference type="Rhea" id="RHEA:15801"/>
        <dbReference type="ChEBI" id="CHEBI:15377"/>
        <dbReference type="ChEBI" id="CHEBI:15378"/>
        <dbReference type="ChEBI" id="CHEBI:28868"/>
        <dbReference type="ChEBI" id="CHEBI:57643"/>
        <dbReference type="ChEBI" id="CHEBI:58168"/>
        <dbReference type="EC" id="3.1.1.4"/>
    </reaction>
</comment>
<comment type="cofactor">
    <cofactor evidence="1">
        <name>Ca(2+)</name>
        <dbReference type="ChEBI" id="CHEBI:29108"/>
    </cofactor>
    <text evidence="1">Binds 1 Ca(2+) ion per subunit.</text>
</comment>
<comment type="subcellular location">
    <subcellularLocation>
        <location>Secreted</location>
    </subcellularLocation>
</comment>
<comment type="tissue specificity">
    <text>Expressed by the venom gland.</text>
</comment>
<comment type="miscellaneous">
    <text>The sequence of isozyme pa3b is shown.</text>
</comment>
<comment type="similarity">
    <text evidence="3">Belongs to the phospholipase A2 family. Group III subfamily.</text>
</comment>
<sequence length="143" mass="16048">GAFIMPGTLWCGAGNAASDYSQLGTEKDTDMCCRDHDHCENWISALEYKHGMRNYYPSTISHCDCDNQFRSCLMKLKDGTADYVGQTYFNVLKIPCFELEEGEGCVDWNFWLECTESKIMPVAKLVSAAPYQAQAETQSGEGR</sequence>
<organism>
    <name type="scientific">Heloderma suspectum</name>
    <name type="common">Gila monster</name>
    <dbReference type="NCBI Taxonomy" id="8554"/>
    <lineage>
        <taxon>Eukaryota</taxon>
        <taxon>Metazoa</taxon>
        <taxon>Chordata</taxon>
        <taxon>Craniata</taxon>
        <taxon>Vertebrata</taxon>
        <taxon>Euteleostomi</taxon>
        <taxon>Lepidosauria</taxon>
        <taxon>Squamata</taxon>
        <taxon>Bifurcata</taxon>
        <taxon>Unidentata</taxon>
        <taxon>Episquamata</taxon>
        <taxon>Toxicofera</taxon>
        <taxon>Anguimorpha</taxon>
        <taxon>Neoanguimorpha</taxon>
        <taxon>Helodermatidae</taxon>
        <taxon>Heloderma</taxon>
    </lineage>
</organism>
<name>PA23_HELSU</name>
<dbReference type="EC" id="3.1.1.4"/>
<dbReference type="PIR" id="S14764">
    <property type="entry name" value="PSGHA5"/>
</dbReference>
<dbReference type="SMR" id="P16354"/>
<dbReference type="GO" id="GO:0005576">
    <property type="term" value="C:extracellular region"/>
    <property type="evidence" value="ECO:0007669"/>
    <property type="project" value="UniProtKB-SubCell"/>
</dbReference>
<dbReference type="GO" id="GO:0046872">
    <property type="term" value="F:metal ion binding"/>
    <property type="evidence" value="ECO:0007669"/>
    <property type="project" value="UniProtKB-KW"/>
</dbReference>
<dbReference type="GO" id="GO:0004623">
    <property type="term" value="F:phospholipase A2 activity"/>
    <property type="evidence" value="ECO:0007669"/>
    <property type="project" value="UniProtKB-EC"/>
</dbReference>
<dbReference type="GO" id="GO:0050482">
    <property type="term" value="P:arachidonate secretion"/>
    <property type="evidence" value="ECO:0007669"/>
    <property type="project" value="InterPro"/>
</dbReference>
<dbReference type="GO" id="GO:0016042">
    <property type="term" value="P:lipid catabolic process"/>
    <property type="evidence" value="ECO:0007669"/>
    <property type="project" value="UniProtKB-KW"/>
</dbReference>
<dbReference type="GO" id="GO:0006644">
    <property type="term" value="P:phospholipid metabolic process"/>
    <property type="evidence" value="ECO:0007669"/>
    <property type="project" value="InterPro"/>
</dbReference>
<dbReference type="CDD" id="cd04704">
    <property type="entry name" value="PLA2_bee_venom_like"/>
    <property type="match status" value="1"/>
</dbReference>
<dbReference type="FunFam" id="1.20.90.10:FF:000002">
    <property type="entry name" value="Phospholipase A2 group III"/>
    <property type="match status" value="1"/>
</dbReference>
<dbReference type="Gene3D" id="1.20.90.10">
    <property type="entry name" value="Phospholipase A2 domain"/>
    <property type="match status" value="1"/>
</dbReference>
<dbReference type="InterPro" id="IPR016090">
    <property type="entry name" value="PLipase_A2_dom"/>
</dbReference>
<dbReference type="InterPro" id="IPR036444">
    <property type="entry name" value="PLipase_A2_dom_sf"/>
</dbReference>
<dbReference type="InterPro" id="IPR033113">
    <property type="entry name" value="PLipase_A2_His_AS"/>
</dbReference>
<dbReference type="PANTHER" id="PTHR12253">
    <property type="entry name" value="RH14732P"/>
    <property type="match status" value="1"/>
</dbReference>
<dbReference type="Pfam" id="PF05826">
    <property type="entry name" value="Phospholip_A2_2"/>
    <property type="match status" value="1"/>
</dbReference>
<dbReference type="SMART" id="SM00085">
    <property type="entry name" value="PA2c"/>
    <property type="match status" value="1"/>
</dbReference>
<dbReference type="SUPFAM" id="SSF48619">
    <property type="entry name" value="Phospholipase A2, PLA2"/>
    <property type="match status" value="1"/>
</dbReference>
<dbReference type="PROSITE" id="PS00118">
    <property type="entry name" value="PA2_HIS"/>
    <property type="match status" value="1"/>
</dbReference>
<accession>P16354</accession>
<accession>P80004</accession>
<accession>P80005</accession>
<protein>
    <recommendedName>
        <fullName>Phospholipase A2 isozymes PA3A/PA3B/PA5</fullName>
        <shortName>PLA2</shortName>
        <ecNumber>3.1.1.4</ecNumber>
    </recommendedName>
    <alternativeName>
        <fullName>Phosphatidylcholine 2-acylhydrolase</fullName>
    </alternativeName>
</protein>